<accession>B0K710</accession>
<comment type="function">
    <text evidence="1">Involved in DNA repair and RecF pathway recombination.</text>
</comment>
<comment type="similarity">
    <text evidence="1">Belongs to the RecO family.</text>
</comment>
<organism>
    <name type="scientific">Thermoanaerobacter sp. (strain X514)</name>
    <dbReference type="NCBI Taxonomy" id="399726"/>
    <lineage>
        <taxon>Bacteria</taxon>
        <taxon>Bacillati</taxon>
        <taxon>Bacillota</taxon>
        <taxon>Clostridia</taxon>
        <taxon>Thermoanaerobacterales</taxon>
        <taxon>Thermoanaerobacteraceae</taxon>
        <taxon>Thermoanaerobacter</taxon>
    </lineage>
</organism>
<evidence type="ECO:0000255" key="1">
    <source>
        <dbReference type="HAMAP-Rule" id="MF_00201"/>
    </source>
</evidence>
<proteinExistence type="inferred from homology"/>
<name>RECO_THEPX</name>
<dbReference type="EMBL" id="CP000923">
    <property type="protein sequence ID" value="ABY92636.1"/>
    <property type="molecule type" value="Genomic_DNA"/>
</dbReference>
<dbReference type="RefSeq" id="WP_009052247.1">
    <property type="nucleotide sequence ID" value="NC_010320.1"/>
</dbReference>
<dbReference type="SMR" id="B0K710"/>
<dbReference type="KEGG" id="tex:Teth514_1346"/>
<dbReference type="HOGENOM" id="CLU_066632_1_1_9"/>
<dbReference type="Proteomes" id="UP000002155">
    <property type="component" value="Chromosome"/>
</dbReference>
<dbReference type="GO" id="GO:0043590">
    <property type="term" value="C:bacterial nucleoid"/>
    <property type="evidence" value="ECO:0007669"/>
    <property type="project" value="TreeGrafter"/>
</dbReference>
<dbReference type="GO" id="GO:0006310">
    <property type="term" value="P:DNA recombination"/>
    <property type="evidence" value="ECO:0007669"/>
    <property type="project" value="UniProtKB-UniRule"/>
</dbReference>
<dbReference type="GO" id="GO:0006302">
    <property type="term" value="P:double-strand break repair"/>
    <property type="evidence" value="ECO:0007669"/>
    <property type="project" value="TreeGrafter"/>
</dbReference>
<dbReference type="Gene3D" id="2.40.50.140">
    <property type="entry name" value="Nucleic acid-binding proteins"/>
    <property type="match status" value="1"/>
</dbReference>
<dbReference type="Gene3D" id="1.20.1440.120">
    <property type="entry name" value="Recombination protein O, C-terminal domain"/>
    <property type="match status" value="1"/>
</dbReference>
<dbReference type="HAMAP" id="MF_00201">
    <property type="entry name" value="RecO"/>
    <property type="match status" value="1"/>
</dbReference>
<dbReference type="InterPro" id="IPR037278">
    <property type="entry name" value="ARFGAP/RecO"/>
</dbReference>
<dbReference type="InterPro" id="IPR022572">
    <property type="entry name" value="DNA_rep/recomb_RecO_N"/>
</dbReference>
<dbReference type="InterPro" id="IPR012340">
    <property type="entry name" value="NA-bd_OB-fold"/>
</dbReference>
<dbReference type="InterPro" id="IPR003717">
    <property type="entry name" value="RecO"/>
</dbReference>
<dbReference type="InterPro" id="IPR042242">
    <property type="entry name" value="RecO_C"/>
</dbReference>
<dbReference type="NCBIfam" id="TIGR00613">
    <property type="entry name" value="reco"/>
    <property type="match status" value="1"/>
</dbReference>
<dbReference type="PANTHER" id="PTHR33991">
    <property type="entry name" value="DNA REPAIR PROTEIN RECO"/>
    <property type="match status" value="1"/>
</dbReference>
<dbReference type="PANTHER" id="PTHR33991:SF1">
    <property type="entry name" value="DNA REPAIR PROTEIN RECO"/>
    <property type="match status" value="1"/>
</dbReference>
<dbReference type="Pfam" id="PF02565">
    <property type="entry name" value="RecO_C"/>
    <property type="match status" value="1"/>
</dbReference>
<dbReference type="Pfam" id="PF11967">
    <property type="entry name" value="RecO_N"/>
    <property type="match status" value="1"/>
</dbReference>
<dbReference type="SUPFAM" id="SSF57863">
    <property type="entry name" value="ArfGap/RecO-like zinc finger"/>
    <property type="match status" value="1"/>
</dbReference>
<dbReference type="SUPFAM" id="SSF50249">
    <property type="entry name" value="Nucleic acid-binding proteins"/>
    <property type="match status" value="1"/>
</dbReference>
<protein>
    <recommendedName>
        <fullName evidence="1">DNA repair protein RecO</fullName>
    </recommendedName>
    <alternativeName>
        <fullName evidence="1">Recombination protein O</fullName>
    </alternativeName>
</protein>
<feature type="chain" id="PRO_1000099425" description="DNA repair protein RecO">
    <location>
        <begin position="1"/>
        <end position="248"/>
    </location>
</feature>
<gene>
    <name evidence="1" type="primary">recO</name>
    <name type="ordered locus">Teth514_1346</name>
</gene>
<reference key="1">
    <citation type="submission" date="2008-01" db="EMBL/GenBank/DDBJ databases">
        <title>Complete sequence of Thermoanaerobacter sp. X514.</title>
        <authorList>
            <consortium name="US DOE Joint Genome Institute"/>
            <person name="Copeland A."/>
            <person name="Lucas S."/>
            <person name="Lapidus A."/>
            <person name="Barry K."/>
            <person name="Glavina del Rio T."/>
            <person name="Dalin E."/>
            <person name="Tice H."/>
            <person name="Pitluck S."/>
            <person name="Bruce D."/>
            <person name="Goodwin L."/>
            <person name="Saunders E."/>
            <person name="Brettin T."/>
            <person name="Detter J.C."/>
            <person name="Han C."/>
            <person name="Schmutz J."/>
            <person name="Larimer F."/>
            <person name="Land M."/>
            <person name="Hauser L."/>
            <person name="Kyrpides N."/>
            <person name="Kim E."/>
            <person name="Hemme C."/>
            <person name="Fields M.W."/>
            <person name="He Z."/>
            <person name="Zhou J."/>
            <person name="Richardson P."/>
        </authorList>
    </citation>
    <scope>NUCLEOTIDE SEQUENCE [LARGE SCALE GENOMIC DNA]</scope>
    <source>
        <strain>X514</strain>
    </source>
</reference>
<keyword id="KW-0227">DNA damage</keyword>
<keyword id="KW-0233">DNA recombination</keyword>
<keyword id="KW-0234">DNA repair</keyword>
<sequence length="248" mass="28545">MRLLKTEAIVLKNNLIGETDKIATLFTKSYGKLQAVAKGARRSKSRFVNAIRPFVVANYVIFEGQNYYYIDQWELIEAHKNIEKDLAKFSVASYIAETINKILEENQKSERLYLFLKHSLKAVDELQIDPLIFISSYNLKLVSLLGYMPQLDNCVVCGKRENLKYFSNSCGGAVCINCKNKCFDAKPLHEVTLKAIKYFLKGDYDKLQNIKVSGVIKEEVDKIITAYMKEHLEIEFKSKDFINNLQNM</sequence>